<name>HBA_CAMBA</name>
<feature type="chain" id="PRO_0000052578" description="Hemoglobin subunit alpha">
    <location>
        <begin position="1"/>
        <end position="141"/>
    </location>
</feature>
<feature type="peptide" id="PRO_0000455845" description="Hemopressin" evidence="2">
    <location>
        <begin position="95"/>
        <end position="103"/>
    </location>
</feature>
<feature type="domain" description="Globin" evidence="4">
    <location>
        <begin position="1"/>
        <end position="141"/>
    </location>
</feature>
<feature type="binding site" evidence="4">
    <location>
        <position position="58"/>
    </location>
    <ligand>
        <name>O2</name>
        <dbReference type="ChEBI" id="CHEBI:15379"/>
    </ligand>
</feature>
<feature type="binding site" description="proximal binding residue" evidence="4">
    <location>
        <position position="87"/>
    </location>
    <ligand>
        <name>heme b</name>
        <dbReference type="ChEBI" id="CHEBI:60344"/>
    </ligand>
    <ligandPart>
        <name>Fe</name>
        <dbReference type="ChEBI" id="CHEBI:18248"/>
    </ligandPart>
</feature>
<feature type="modified residue" description="Phosphoserine" evidence="3">
    <location>
        <position position="3"/>
    </location>
</feature>
<feature type="modified residue" description="N6-succinyllysine" evidence="1">
    <location>
        <position position="7"/>
    </location>
</feature>
<feature type="modified residue" description="Phosphothreonine" evidence="3">
    <location>
        <position position="8"/>
    </location>
</feature>
<feature type="modified residue" description="N6-succinyllysine" evidence="1">
    <location>
        <position position="11"/>
    </location>
</feature>
<feature type="modified residue" description="N6-acetyllysine; alternate" evidence="3">
    <location>
        <position position="16"/>
    </location>
</feature>
<feature type="modified residue" description="N6-succinyllysine; alternate" evidence="1">
    <location>
        <position position="16"/>
    </location>
</feature>
<feature type="modified residue" description="Phosphotyrosine" evidence="3">
    <location>
        <position position="24"/>
    </location>
</feature>
<feature type="modified residue" description="N6-succinyllysine" evidence="1">
    <location>
        <position position="40"/>
    </location>
</feature>
<feature type="modified residue" description="Phosphoserine" evidence="3">
    <location>
        <position position="49"/>
    </location>
</feature>
<feature type="modified residue" description="Phosphoserine" evidence="1">
    <location>
        <position position="102"/>
    </location>
</feature>
<feature type="modified residue" description="Phosphothreonine" evidence="1">
    <location>
        <position position="108"/>
    </location>
</feature>
<feature type="modified residue" description="Phosphoserine" evidence="1">
    <location>
        <position position="124"/>
    </location>
</feature>
<feature type="modified residue" description="Phosphothreonine" evidence="1">
    <location>
        <position position="134"/>
    </location>
</feature>
<feature type="modified residue" description="Phosphothreonine" evidence="1">
    <location>
        <position position="137"/>
    </location>
</feature>
<feature type="modified residue" description="Phosphoserine" evidence="1">
    <location>
        <position position="138"/>
    </location>
</feature>
<evidence type="ECO:0000250" key="1">
    <source>
        <dbReference type="UniProtKB" id="P01942"/>
    </source>
</evidence>
<evidence type="ECO:0000250" key="2">
    <source>
        <dbReference type="UniProtKB" id="P01946"/>
    </source>
</evidence>
<evidence type="ECO:0000250" key="3">
    <source>
        <dbReference type="UniProtKB" id="P69905"/>
    </source>
</evidence>
<evidence type="ECO:0000255" key="4">
    <source>
        <dbReference type="PROSITE-ProRule" id="PRU00238"/>
    </source>
</evidence>
<comment type="function">
    <text>Involved in oxygen transport from the lung to the various peripheral tissues.</text>
</comment>
<comment type="function">
    <molecule>Hemopressin</molecule>
    <text evidence="2">Hemopressin acts as an antagonist peptide of the cannabinoid receptor CNR1. Hemopressin-binding efficiently blocks cannabinoid receptor CNR1 and subsequent signaling.</text>
</comment>
<comment type="subunit">
    <text>Heterotetramer of two alpha chains and two beta chains.</text>
</comment>
<comment type="tissue specificity">
    <text>Red blood cells.</text>
</comment>
<comment type="similarity">
    <text evidence="4">Belongs to the globin family.</text>
</comment>
<keyword id="KW-0007">Acetylation</keyword>
<keyword id="KW-0903">Direct protein sequencing</keyword>
<keyword id="KW-0349">Heme</keyword>
<keyword id="KW-0408">Iron</keyword>
<keyword id="KW-0479">Metal-binding</keyword>
<keyword id="KW-0561">Oxygen transport</keyword>
<keyword id="KW-0597">Phosphoprotein</keyword>
<keyword id="KW-1185">Reference proteome</keyword>
<keyword id="KW-0813">Transport</keyword>
<accession>P63105</accession>
<accession>P01974</accession>
<dbReference type="PIR" id="B92758">
    <property type="entry name" value="HACMB"/>
</dbReference>
<dbReference type="SMR" id="P63105"/>
<dbReference type="Proteomes" id="UP000694950">
    <property type="component" value="Unplaced"/>
</dbReference>
<dbReference type="GO" id="GO:0072562">
    <property type="term" value="C:blood microparticle"/>
    <property type="evidence" value="ECO:0007669"/>
    <property type="project" value="TreeGrafter"/>
</dbReference>
<dbReference type="GO" id="GO:0031838">
    <property type="term" value="C:haptoglobin-hemoglobin complex"/>
    <property type="evidence" value="ECO:0007669"/>
    <property type="project" value="TreeGrafter"/>
</dbReference>
<dbReference type="GO" id="GO:0005833">
    <property type="term" value="C:hemoglobin complex"/>
    <property type="evidence" value="ECO:0007669"/>
    <property type="project" value="InterPro"/>
</dbReference>
<dbReference type="GO" id="GO:0031720">
    <property type="term" value="F:haptoglobin binding"/>
    <property type="evidence" value="ECO:0007669"/>
    <property type="project" value="TreeGrafter"/>
</dbReference>
<dbReference type="GO" id="GO:0020037">
    <property type="term" value="F:heme binding"/>
    <property type="evidence" value="ECO:0007669"/>
    <property type="project" value="InterPro"/>
</dbReference>
<dbReference type="GO" id="GO:0005506">
    <property type="term" value="F:iron ion binding"/>
    <property type="evidence" value="ECO:0007669"/>
    <property type="project" value="InterPro"/>
</dbReference>
<dbReference type="GO" id="GO:0043177">
    <property type="term" value="F:organic acid binding"/>
    <property type="evidence" value="ECO:0007669"/>
    <property type="project" value="TreeGrafter"/>
</dbReference>
<dbReference type="GO" id="GO:0019825">
    <property type="term" value="F:oxygen binding"/>
    <property type="evidence" value="ECO:0007669"/>
    <property type="project" value="InterPro"/>
</dbReference>
<dbReference type="GO" id="GO:0005344">
    <property type="term" value="F:oxygen carrier activity"/>
    <property type="evidence" value="ECO:0007669"/>
    <property type="project" value="UniProtKB-KW"/>
</dbReference>
<dbReference type="GO" id="GO:0004601">
    <property type="term" value="F:peroxidase activity"/>
    <property type="evidence" value="ECO:0007669"/>
    <property type="project" value="TreeGrafter"/>
</dbReference>
<dbReference type="GO" id="GO:0042744">
    <property type="term" value="P:hydrogen peroxide catabolic process"/>
    <property type="evidence" value="ECO:0007669"/>
    <property type="project" value="TreeGrafter"/>
</dbReference>
<dbReference type="CDD" id="cd08927">
    <property type="entry name" value="Hb-alpha-like"/>
    <property type="match status" value="1"/>
</dbReference>
<dbReference type="FunFam" id="1.10.490.10:FF:000002">
    <property type="entry name" value="Hemoglobin subunit alpha"/>
    <property type="match status" value="1"/>
</dbReference>
<dbReference type="Gene3D" id="1.10.490.10">
    <property type="entry name" value="Globins"/>
    <property type="match status" value="1"/>
</dbReference>
<dbReference type="InterPro" id="IPR000971">
    <property type="entry name" value="Globin"/>
</dbReference>
<dbReference type="InterPro" id="IPR009050">
    <property type="entry name" value="Globin-like_sf"/>
</dbReference>
<dbReference type="InterPro" id="IPR012292">
    <property type="entry name" value="Globin/Proto"/>
</dbReference>
<dbReference type="InterPro" id="IPR002338">
    <property type="entry name" value="Hemoglobin_a-typ"/>
</dbReference>
<dbReference type="InterPro" id="IPR050056">
    <property type="entry name" value="Hemoglobin_oxygen_transport"/>
</dbReference>
<dbReference type="InterPro" id="IPR002339">
    <property type="entry name" value="Hemoglobin_pi"/>
</dbReference>
<dbReference type="PANTHER" id="PTHR11442">
    <property type="entry name" value="HEMOGLOBIN FAMILY MEMBER"/>
    <property type="match status" value="1"/>
</dbReference>
<dbReference type="PANTHER" id="PTHR11442:SF48">
    <property type="entry name" value="HEMOGLOBIN SUBUNIT ALPHA"/>
    <property type="match status" value="1"/>
</dbReference>
<dbReference type="Pfam" id="PF00042">
    <property type="entry name" value="Globin"/>
    <property type="match status" value="1"/>
</dbReference>
<dbReference type="PRINTS" id="PR00612">
    <property type="entry name" value="ALPHAHAEM"/>
</dbReference>
<dbReference type="PRINTS" id="PR00815">
    <property type="entry name" value="PIHAEM"/>
</dbReference>
<dbReference type="SUPFAM" id="SSF46458">
    <property type="entry name" value="Globin-like"/>
    <property type="match status" value="1"/>
</dbReference>
<dbReference type="PROSITE" id="PS01033">
    <property type="entry name" value="GLOBIN"/>
    <property type="match status" value="1"/>
</dbReference>
<protein>
    <recommendedName>
        <fullName>Hemoglobin subunit alpha</fullName>
    </recommendedName>
    <alternativeName>
        <fullName>Alpha-globin</fullName>
    </alternativeName>
    <alternativeName>
        <fullName>Hemoglobin alpha chain</fullName>
    </alternativeName>
    <component>
        <recommendedName>
            <fullName evidence="2">Hemopressin</fullName>
        </recommendedName>
    </component>
</protein>
<proteinExistence type="evidence at protein level"/>
<reference key="1">
    <citation type="journal article" date="1980" name="J. Chem. Soc. Pak.">
        <title>Respiration at high altitudes, phosphate-protein-interaction: sequence of the hemoglobins of the hamster (Mesocricetus aureatus) and the camel (Camelus ferus, Camelidae).</title>
        <authorList>
            <person name="Braunitzer G."/>
            <person name="Schrank B."/>
            <person name="Stangl A."/>
            <person name="Wiesner H."/>
        </authorList>
    </citation>
    <scope>PROTEIN SEQUENCE</scope>
</reference>
<sequence length="141" mass="15172">VLSSKDKTNVKTAFGKIGGHAAEYGAEALERMFLGFPTTKTYFPHFDLSHGSAQVKAHGKKVGDALTKAADHLDDLPSALSALSDLHAHKLRVDPVNFKLLSHCLLVTVAAHHPGDFTPSVHASLDKFLANVSTVLTSKYR</sequence>
<gene>
    <name type="primary">HBA</name>
</gene>
<organism>
    <name type="scientific">Camelus bactrianus</name>
    <name type="common">Bactrian camel</name>
    <dbReference type="NCBI Taxonomy" id="9837"/>
    <lineage>
        <taxon>Eukaryota</taxon>
        <taxon>Metazoa</taxon>
        <taxon>Chordata</taxon>
        <taxon>Craniata</taxon>
        <taxon>Vertebrata</taxon>
        <taxon>Euteleostomi</taxon>
        <taxon>Mammalia</taxon>
        <taxon>Eutheria</taxon>
        <taxon>Laurasiatheria</taxon>
        <taxon>Artiodactyla</taxon>
        <taxon>Tylopoda</taxon>
        <taxon>Camelidae</taxon>
        <taxon>Camelus</taxon>
    </lineage>
</organism>